<comment type="function">
    <text evidence="1">One of the primary rRNA binding proteins, it binds specifically to the 5'-end of 16S ribosomal RNA.</text>
</comment>
<comment type="subunit">
    <text evidence="1">Part of the 30S ribosomal subunit.</text>
</comment>
<comment type="similarity">
    <text evidence="1">Belongs to the universal ribosomal protein uS17 family.</text>
</comment>
<dbReference type="EMBL" id="CP000920">
    <property type="protein sequence ID" value="ACO21045.1"/>
    <property type="molecule type" value="Genomic_DNA"/>
</dbReference>
<dbReference type="RefSeq" id="WP_000440801.1">
    <property type="nucleotide sequence ID" value="NC_012467.1"/>
</dbReference>
<dbReference type="SMR" id="C1CIA6"/>
<dbReference type="GeneID" id="93920913"/>
<dbReference type="KEGG" id="spp:SPP_0269"/>
<dbReference type="HOGENOM" id="CLU_073626_1_0_9"/>
<dbReference type="GO" id="GO:0022627">
    <property type="term" value="C:cytosolic small ribosomal subunit"/>
    <property type="evidence" value="ECO:0007669"/>
    <property type="project" value="TreeGrafter"/>
</dbReference>
<dbReference type="GO" id="GO:0019843">
    <property type="term" value="F:rRNA binding"/>
    <property type="evidence" value="ECO:0007669"/>
    <property type="project" value="UniProtKB-UniRule"/>
</dbReference>
<dbReference type="GO" id="GO:0003735">
    <property type="term" value="F:structural constituent of ribosome"/>
    <property type="evidence" value="ECO:0007669"/>
    <property type="project" value="InterPro"/>
</dbReference>
<dbReference type="GO" id="GO:0006412">
    <property type="term" value="P:translation"/>
    <property type="evidence" value="ECO:0007669"/>
    <property type="project" value="UniProtKB-UniRule"/>
</dbReference>
<dbReference type="CDD" id="cd00364">
    <property type="entry name" value="Ribosomal_uS17"/>
    <property type="match status" value="1"/>
</dbReference>
<dbReference type="FunFam" id="2.40.50.140:FF:000026">
    <property type="entry name" value="30S ribosomal protein S17"/>
    <property type="match status" value="1"/>
</dbReference>
<dbReference type="Gene3D" id="2.40.50.140">
    <property type="entry name" value="Nucleic acid-binding proteins"/>
    <property type="match status" value="1"/>
</dbReference>
<dbReference type="HAMAP" id="MF_01345_B">
    <property type="entry name" value="Ribosomal_uS17_B"/>
    <property type="match status" value="1"/>
</dbReference>
<dbReference type="InterPro" id="IPR012340">
    <property type="entry name" value="NA-bd_OB-fold"/>
</dbReference>
<dbReference type="InterPro" id="IPR000266">
    <property type="entry name" value="Ribosomal_uS17"/>
</dbReference>
<dbReference type="InterPro" id="IPR019984">
    <property type="entry name" value="Ribosomal_uS17_bact/chlr"/>
</dbReference>
<dbReference type="InterPro" id="IPR019979">
    <property type="entry name" value="Ribosomal_uS17_CS"/>
</dbReference>
<dbReference type="NCBIfam" id="NF004123">
    <property type="entry name" value="PRK05610.1"/>
    <property type="match status" value="1"/>
</dbReference>
<dbReference type="NCBIfam" id="TIGR03635">
    <property type="entry name" value="uS17_bact"/>
    <property type="match status" value="1"/>
</dbReference>
<dbReference type="PANTHER" id="PTHR10744">
    <property type="entry name" value="40S RIBOSOMAL PROTEIN S11 FAMILY MEMBER"/>
    <property type="match status" value="1"/>
</dbReference>
<dbReference type="PANTHER" id="PTHR10744:SF1">
    <property type="entry name" value="SMALL RIBOSOMAL SUBUNIT PROTEIN US17M"/>
    <property type="match status" value="1"/>
</dbReference>
<dbReference type="Pfam" id="PF00366">
    <property type="entry name" value="Ribosomal_S17"/>
    <property type="match status" value="1"/>
</dbReference>
<dbReference type="PRINTS" id="PR00973">
    <property type="entry name" value="RIBOSOMALS17"/>
</dbReference>
<dbReference type="SUPFAM" id="SSF50249">
    <property type="entry name" value="Nucleic acid-binding proteins"/>
    <property type="match status" value="1"/>
</dbReference>
<dbReference type="PROSITE" id="PS00056">
    <property type="entry name" value="RIBOSOMAL_S17"/>
    <property type="match status" value="1"/>
</dbReference>
<organism>
    <name type="scientific">Streptococcus pneumoniae (strain P1031)</name>
    <dbReference type="NCBI Taxonomy" id="488223"/>
    <lineage>
        <taxon>Bacteria</taxon>
        <taxon>Bacillati</taxon>
        <taxon>Bacillota</taxon>
        <taxon>Bacilli</taxon>
        <taxon>Lactobacillales</taxon>
        <taxon>Streptococcaceae</taxon>
        <taxon>Streptococcus</taxon>
    </lineage>
</organism>
<protein>
    <recommendedName>
        <fullName evidence="1">Small ribosomal subunit protein uS17</fullName>
    </recommendedName>
    <alternativeName>
        <fullName evidence="2">30S ribosomal protein S17</fullName>
    </alternativeName>
</protein>
<name>RS17_STRZP</name>
<reference key="1">
    <citation type="journal article" date="2010" name="Genome Biol.">
        <title>Structure and dynamics of the pan-genome of Streptococcus pneumoniae and closely related species.</title>
        <authorList>
            <person name="Donati C."/>
            <person name="Hiller N.L."/>
            <person name="Tettelin H."/>
            <person name="Muzzi A."/>
            <person name="Croucher N.J."/>
            <person name="Angiuoli S.V."/>
            <person name="Oggioni M."/>
            <person name="Dunning Hotopp J.C."/>
            <person name="Hu F.Z."/>
            <person name="Riley D.R."/>
            <person name="Covacci A."/>
            <person name="Mitchell T.J."/>
            <person name="Bentley S.D."/>
            <person name="Kilian M."/>
            <person name="Ehrlich G.D."/>
            <person name="Rappuoli R."/>
            <person name="Moxon E.R."/>
            <person name="Masignani V."/>
        </authorList>
    </citation>
    <scope>NUCLEOTIDE SEQUENCE [LARGE SCALE GENOMIC DNA]</scope>
    <source>
        <strain>P1031</strain>
    </source>
</reference>
<feature type="chain" id="PRO_1000166502" description="Small ribosomal subunit protein uS17">
    <location>
        <begin position="1"/>
        <end position="86"/>
    </location>
</feature>
<proteinExistence type="inferred from homology"/>
<gene>
    <name evidence="1" type="primary">rpsQ</name>
    <name type="ordered locus">SPP_0269</name>
</gene>
<keyword id="KW-0687">Ribonucleoprotein</keyword>
<keyword id="KW-0689">Ribosomal protein</keyword>
<keyword id="KW-0694">RNA-binding</keyword>
<keyword id="KW-0699">rRNA-binding</keyword>
<evidence type="ECO:0000255" key="1">
    <source>
        <dbReference type="HAMAP-Rule" id="MF_01345"/>
    </source>
</evidence>
<evidence type="ECO:0000305" key="2"/>
<sequence length="86" mass="10011">MERNNRKVLVGRVVSDKMDKTITVVVETKRNHPVYGKRINYSKKYKAHDENNVAKEGDIVRIMETRPLSATKRFRLVEVVEEAVII</sequence>
<accession>C1CIA6</accession>